<name>YABA_LACGA</name>
<evidence type="ECO:0000255" key="1">
    <source>
        <dbReference type="HAMAP-Rule" id="MF_01159"/>
    </source>
</evidence>
<sequence length="114" mass="13027">MDPFSQLSQLQQNLQAMTKTVAGLENDMLEVLKENTELKVENQLLREKISKLDANKEPAENKSQAGLKSLRNIYDSGYHICNMYYGSHRESGEDCMFCLDILDNFVNHGQKNRG</sequence>
<organism>
    <name type="scientific">Lactobacillus gasseri (strain ATCC 33323 / DSM 20243 / BCRC 14619 / CIP 102991 / JCM 1131 / KCTC 3163 / NCIMB 11718 / NCTC 13722 / AM63)</name>
    <dbReference type="NCBI Taxonomy" id="324831"/>
    <lineage>
        <taxon>Bacteria</taxon>
        <taxon>Bacillati</taxon>
        <taxon>Bacillota</taxon>
        <taxon>Bacilli</taxon>
        <taxon>Lactobacillales</taxon>
        <taxon>Lactobacillaceae</taxon>
        <taxon>Lactobacillus</taxon>
    </lineage>
</organism>
<feature type="chain" id="PRO_1000065577" description="Replication initiation control protein YabA">
    <location>
        <begin position="1"/>
        <end position="114"/>
    </location>
</feature>
<feature type="binding site" evidence="1">
    <location>
        <position position="79"/>
    </location>
    <ligand>
        <name>Zn(2+)</name>
        <dbReference type="ChEBI" id="CHEBI:29105"/>
    </ligand>
</feature>
<feature type="binding site" evidence="1">
    <location>
        <position position="81"/>
    </location>
    <ligand>
        <name>Zn(2+)</name>
        <dbReference type="ChEBI" id="CHEBI:29105"/>
    </ligand>
</feature>
<feature type="binding site" evidence="1">
    <location>
        <position position="95"/>
    </location>
    <ligand>
        <name>Zn(2+)</name>
        <dbReference type="ChEBI" id="CHEBI:29105"/>
    </ligand>
</feature>
<feature type="binding site" evidence="1">
    <location>
        <position position="98"/>
    </location>
    <ligand>
        <name>Zn(2+)</name>
        <dbReference type="ChEBI" id="CHEBI:29105"/>
    </ligand>
</feature>
<protein>
    <recommendedName>
        <fullName evidence="1">Replication initiation control protein YabA</fullName>
    </recommendedName>
</protein>
<reference key="1">
    <citation type="journal article" date="2006" name="Proc. Natl. Acad. Sci. U.S.A.">
        <title>Comparative genomics of the lactic acid bacteria.</title>
        <authorList>
            <person name="Makarova K.S."/>
            <person name="Slesarev A."/>
            <person name="Wolf Y.I."/>
            <person name="Sorokin A."/>
            <person name="Mirkin B."/>
            <person name="Koonin E.V."/>
            <person name="Pavlov A."/>
            <person name="Pavlova N."/>
            <person name="Karamychev V."/>
            <person name="Polouchine N."/>
            <person name="Shakhova V."/>
            <person name="Grigoriev I."/>
            <person name="Lou Y."/>
            <person name="Rohksar D."/>
            <person name="Lucas S."/>
            <person name="Huang K."/>
            <person name="Goodstein D.M."/>
            <person name="Hawkins T."/>
            <person name="Plengvidhya V."/>
            <person name="Welker D."/>
            <person name="Hughes J."/>
            <person name="Goh Y."/>
            <person name="Benson A."/>
            <person name="Baldwin K."/>
            <person name="Lee J.-H."/>
            <person name="Diaz-Muniz I."/>
            <person name="Dosti B."/>
            <person name="Smeianov V."/>
            <person name="Wechter W."/>
            <person name="Barabote R."/>
            <person name="Lorca G."/>
            <person name="Altermann E."/>
            <person name="Barrangou R."/>
            <person name="Ganesan B."/>
            <person name="Xie Y."/>
            <person name="Rawsthorne H."/>
            <person name="Tamir D."/>
            <person name="Parker C."/>
            <person name="Breidt F."/>
            <person name="Broadbent J.R."/>
            <person name="Hutkins R."/>
            <person name="O'Sullivan D."/>
            <person name="Steele J."/>
            <person name="Unlu G."/>
            <person name="Saier M.H. Jr."/>
            <person name="Klaenhammer T."/>
            <person name="Richardson P."/>
            <person name="Kozyavkin S."/>
            <person name="Weimer B.C."/>
            <person name="Mills D.A."/>
        </authorList>
    </citation>
    <scope>NUCLEOTIDE SEQUENCE [LARGE SCALE GENOMIC DNA]</scope>
    <source>
        <strain>ATCC 33323 / DSM 20243 / BCRC 14619 / CIP 102991 / JCM 1131 / KCTC 3163 / NCIMB 11718 / NCTC 13722 / AM63</strain>
    </source>
</reference>
<dbReference type="EMBL" id="CP000413">
    <property type="protein sequence ID" value="ABJ59780.1"/>
    <property type="molecule type" value="Genomic_DNA"/>
</dbReference>
<dbReference type="RefSeq" id="WP_003647754.1">
    <property type="nucleotide sequence ID" value="NZ_WBMG01000001.1"/>
</dbReference>
<dbReference type="SMR" id="Q045U2"/>
<dbReference type="GeneID" id="29638805"/>
<dbReference type="KEGG" id="lga:LGAS_0375"/>
<dbReference type="HOGENOM" id="CLU_157169_0_1_9"/>
<dbReference type="BioCyc" id="LGAS324831:G1G6Y-374-MONOMER"/>
<dbReference type="Proteomes" id="UP000000664">
    <property type="component" value="Chromosome"/>
</dbReference>
<dbReference type="GO" id="GO:0009295">
    <property type="term" value="C:nucleoid"/>
    <property type="evidence" value="ECO:0007669"/>
    <property type="project" value="UniProtKB-SubCell"/>
</dbReference>
<dbReference type="GO" id="GO:0006260">
    <property type="term" value="P:DNA replication"/>
    <property type="evidence" value="ECO:0007669"/>
    <property type="project" value="UniProtKB-UniRule"/>
</dbReference>
<dbReference type="HAMAP" id="MF_01159">
    <property type="entry name" value="YabA"/>
    <property type="match status" value="1"/>
</dbReference>
<dbReference type="InterPro" id="IPR010377">
    <property type="entry name" value="YabA"/>
</dbReference>
<dbReference type="NCBIfam" id="NF009642">
    <property type="entry name" value="PRK13169.1-3"/>
    <property type="match status" value="1"/>
</dbReference>
<dbReference type="Pfam" id="PF06156">
    <property type="entry name" value="YabA"/>
    <property type="match status" value="1"/>
</dbReference>
<dbReference type="PIRSF" id="PIRSF021439">
    <property type="entry name" value="DUF972"/>
    <property type="match status" value="1"/>
</dbReference>
<accession>Q045U2</accession>
<proteinExistence type="inferred from homology"/>
<comment type="function">
    <text evidence="1">Involved in control of chromosome replication initiation. Inhibits the cooperative binding of DnaA to the oriC region, thus negatively regulating initiation of chromosome replication. Inhibits the ability of DnaA-ATP to form a helix on DNA; does not disassemble preformed DnaA-DNA helices. Decreases the residence time of DnaA on the chromosome at its binding sites (oriC, replication forks and promoter-binding sites). Tethers DnaA to the replication machinery via the DNA polymerase beta sliding clamp subunit (dnaN). Associates with oriC and other DnaA targets on the chromosome in a DnaA-dependent manner.</text>
</comment>
<comment type="cofactor">
    <cofactor evidence="1">
        <name>Zn(2+)</name>
        <dbReference type="ChEBI" id="CHEBI:29105"/>
    </cofactor>
    <text evidence="1">Binds 1 zinc ion per subunit.</text>
</comment>
<comment type="subunit">
    <text evidence="1">Homotetramer. Interacts with both DnaA and DnaN, acting as a bridge between these two proteins.</text>
</comment>
<comment type="subcellular location">
    <subcellularLocation>
        <location evidence="1">Cytoplasm</location>
        <location evidence="1">Nucleoid</location>
    </subcellularLocation>
    <text evidence="1">Localizes in tight foci, which correspond to the replisome at mid-cell throughout the cell cycle.</text>
</comment>
<comment type="similarity">
    <text evidence="1">Belongs to the YabA family.</text>
</comment>
<gene>
    <name evidence="1" type="primary">yabA</name>
    <name type="ordered locus">LGAS_0375</name>
</gene>
<keyword id="KW-0963">Cytoplasm</keyword>
<keyword id="KW-0235">DNA replication</keyword>
<keyword id="KW-0236">DNA replication inhibitor</keyword>
<keyword id="KW-0479">Metal-binding</keyword>
<keyword id="KW-0862">Zinc</keyword>